<proteinExistence type="inferred from homology"/>
<keyword id="KW-0648">Protein biosynthesis</keyword>
<keyword id="KW-1185">Reference proteome</keyword>
<keyword id="KW-0808">Transferase</keyword>
<organism>
    <name type="scientific">Anaeromyxobacter dehalogenans (strain 2CP-C)</name>
    <dbReference type="NCBI Taxonomy" id="290397"/>
    <lineage>
        <taxon>Bacteria</taxon>
        <taxon>Pseudomonadati</taxon>
        <taxon>Myxococcota</taxon>
        <taxon>Myxococcia</taxon>
        <taxon>Myxococcales</taxon>
        <taxon>Cystobacterineae</taxon>
        <taxon>Anaeromyxobacteraceae</taxon>
        <taxon>Anaeromyxobacter</taxon>
    </lineage>
</organism>
<dbReference type="EC" id="2.1.2.9" evidence="1"/>
<dbReference type="EMBL" id="CP000251">
    <property type="protein sequence ID" value="ABC83733.1"/>
    <property type="molecule type" value="Genomic_DNA"/>
</dbReference>
<dbReference type="RefSeq" id="WP_011423015.1">
    <property type="nucleotide sequence ID" value="NC_007760.1"/>
</dbReference>
<dbReference type="SMR" id="Q2IGM4"/>
<dbReference type="STRING" id="290397.Adeh_3969"/>
<dbReference type="KEGG" id="ade:Adeh_3969"/>
<dbReference type="eggNOG" id="COG0223">
    <property type="taxonomic scope" value="Bacteria"/>
</dbReference>
<dbReference type="HOGENOM" id="CLU_033347_2_0_7"/>
<dbReference type="OrthoDB" id="9802815at2"/>
<dbReference type="Proteomes" id="UP000001935">
    <property type="component" value="Chromosome"/>
</dbReference>
<dbReference type="GO" id="GO:0005829">
    <property type="term" value="C:cytosol"/>
    <property type="evidence" value="ECO:0007669"/>
    <property type="project" value="TreeGrafter"/>
</dbReference>
<dbReference type="GO" id="GO:0004479">
    <property type="term" value="F:methionyl-tRNA formyltransferase activity"/>
    <property type="evidence" value="ECO:0007669"/>
    <property type="project" value="UniProtKB-UniRule"/>
</dbReference>
<dbReference type="CDD" id="cd08646">
    <property type="entry name" value="FMT_core_Met-tRNA-FMT_N"/>
    <property type="match status" value="1"/>
</dbReference>
<dbReference type="CDD" id="cd08704">
    <property type="entry name" value="Met_tRNA_FMT_C"/>
    <property type="match status" value="1"/>
</dbReference>
<dbReference type="Gene3D" id="3.10.25.10">
    <property type="entry name" value="Formyl transferase, C-terminal domain"/>
    <property type="match status" value="1"/>
</dbReference>
<dbReference type="Gene3D" id="3.40.50.170">
    <property type="entry name" value="Formyl transferase, N-terminal domain"/>
    <property type="match status" value="1"/>
</dbReference>
<dbReference type="HAMAP" id="MF_00182">
    <property type="entry name" value="Formyl_trans"/>
    <property type="match status" value="1"/>
</dbReference>
<dbReference type="InterPro" id="IPR005794">
    <property type="entry name" value="Fmt"/>
</dbReference>
<dbReference type="InterPro" id="IPR005793">
    <property type="entry name" value="Formyl_trans_C"/>
</dbReference>
<dbReference type="InterPro" id="IPR037022">
    <property type="entry name" value="Formyl_trans_C_sf"/>
</dbReference>
<dbReference type="InterPro" id="IPR002376">
    <property type="entry name" value="Formyl_transf_N"/>
</dbReference>
<dbReference type="InterPro" id="IPR036477">
    <property type="entry name" value="Formyl_transf_N_sf"/>
</dbReference>
<dbReference type="InterPro" id="IPR011034">
    <property type="entry name" value="Formyl_transferase-like_C_sf"/>
</dbReference>
<dbReference type="InterPro" id="IPR001555">
    <property type="entry name" value="GART_AS"/>
</dbReference>
<dbReference type="InterPro" id="IPR044135">
    <property type="entry name" value="Met-tRNA-FMT_C"/>
</dbReference>
<dbReference type="InterPro" id="IPR041711">
    <property type="entry name" value="Met-tRNA-FMT_N"/>
</dbReference>
<dbReference type="NCBIfam" id="TIGR00460">
    <property type="entry name" value="fmt"/>
    <property type="match status" value="1"/>
</dbReference>
<dbReference type="PANTHER" id="PTHR11138">
    <property type="entry name" value="METHIONYL-TRNA FORMYLTRANSFERASE"/>
    <property type="match status" value="1"/>
</dbReference>
<dbReference type="PANTHER" id="PTHR11138:SF5">
    <property type="entry name" value="METHIONYL-TRNA FORMYLTRANSFERASE, MITOCHONDRIAL"/>
    <property type="match status" value="1"/>
</dbReference>
<dbReference type="Pfam" id="PF02911">
    <property type="entry name" value="Formyl_trans_C"/>
    <property type="match status" value="1"/>
</dbReference>
<dbReference type="Pfam" id="PF00551">
    <property type="entry name" value="Formyl_trans_N"/>
    <property type="match status" value="1"/>
</dbReference>
<dbReference type="SUPFAM" id="SSF50486">
    <property type="entry name" value="FMT C-terminal domain-like"/>
    <property type="match status" value="1"/>
</dbReference>
<dbReference type="SUPFAM" id="SSF53328">
    <property type="entry name" value="Formyltransferase"/>
    <property type="match status" value="1"/>
</dbReference>
<dbReference type="PROSITE" id="PS00373">
    <property type="entry name" value="GART"/>
    <property type="match status" value="1"/>
</dbReference>
<evidence type="ECO:0000255" key="1">
    <source>
        <dbReference type="HAMAP-Rule" id="MF_00182"/>
    </source>
</evidence>
<protein>
    <recommendedName>
        <fullName evidence="1">Methionyl-tRNA formyltransferase</fullName>
        <ecNumber evidence="1">2.1.2.9</ecNumber>
    </recommendedName>
</protein>
<name>FMT_ANADE</name>
<comment type="function">
    <text evidence="1">Attaches a formyl group to the free amino group of methionyl-tRNA(fMet). The formyl group appears to play a dual role in the initiator identity of N-formylmethionyl-tRNA by promoting its recognition by IF2 and preventing the misappropriation of this tRNA by the elongation apparatus.</text>
</comment>
<comment type="catalytic activity">
    <reaction evidence="1">
        <text>L-methionyl-tRNA(fMet) + (6R)-10-formyltetrahydrofolate = N-formyl-L-methionyl-tRNA(fMet) + (6S)-5,6,7,8-tetrahydrofolate + H(+)</text>
        <dbReference type="Rhea" id="RHEA:24380"/>
        <dbReference type="Rhea" id="RHEA-COMP:9952"/>
        <dbReference type="Rhea" id="RHEA-COMP:9953"/>
        <dbReference type="ChEBI" id="CHEBI:15378"/>
        <dbReference type="ChEBI" id="CHEBI:57453"/>
        <dbReference type="ChEBI" id="CHEBI:78530"/>
        <dbReference type="ChEBI" id="CHEBI:78844"/>
        <dbReference type="ChEBI" id="CHEBI:195366"/>
        <dbReference type="EC" id="2.1.2.9"/>
    </reaction>
</comment>
<comment type="similarity">
    <text evidence="1">Belongs to the Fmt family.</text>
</comment>
<sequence>MRIAFLGTPAFAVAALDALDRAGHALVAVVAQPDRPAGRGQALREPATKAWARAHGVAVLQPEKVRDGTLAAALRALAPDALVVAAYGRILGKDLLTLAPHGAINVHGSLLPRWRGAAPIQWAVAEGERETGVTIMQMDEGLDTGDILLQRALELREDDTSETLAPRLAALGGEALAEALRLLEAGAIVPVRQDPAQATLARILEKEDGRVAWESPARRVADRLRGFTPWPGAFTTLEGRTLKVLEARPAADLAAPAGEPGEAEVVAGRGLAVACGGGTALLVTRVQLEGRPAQSALDLANGLRRKRFRLGT</sequence>
<accession>Q2IGM4</accession>
<feature type="chain" id="PRO_1000077286" description="Methionyl-tRNA formyltransferase">
    <location>
        <begin position="1"/>
        <end position="312"/>
    </location>
</feature>
<feature type="binding site" evidence="1">
    <location>
        <begin position="109"/>
        <end position="112"/>
    </location>
    <ligand>
        <name>(6S)-5,6,7,8-tetrahydrofolate</name>
        <dbReference type="ChEBI" id="CHEBI:57453"/>
    </ligand>
</feature>
<reference key="1">
    <citation type="submission" date="2006-01" db="EMBL/GenBank/DDBJ databases">
        <title>Complete sequence of Anaeromyxobacter dehalogenans 2CP-C.</title>
        <authorList>
            <person name="Copeland A."/>
            <person name="Lucas S."/>
            <person name="Lapidus A."/>
            <person name="Barry K."/>
            <person name="Detter J.C."/>
            <person name="Glavina T."/>
            <person name="Hammon N."/>
            <person name="Israni S."/>
            <person name="Pitluck S."/>
            <person name="Brettin T."/>
            <person name="Bruce D."/>
            <person name="Han C."/>
            <person name="Tapia R."/>
            <person name="Gilna P."/>
            <person name="Kiss H."/>
            <person name="Schmutz J."/>
            <person name="Larimer F."/>
            <person name="Land M."/>
            <person name="Kyrpides N."/>
            <person name="Anderson I."/>
            <person name="Sanford R.A."/>
            <person name="Ritalahti K.M."/>
            <person name="Thomas H.S."/>
            <person name="Kirby J.R."/>
            <person name="Zhulin I.B."/>
            <person name="Loeffler F.E."/>
            <person name="Richardson P."/>
        </authorList>
    </citation>
    <scope>NUCLEOTIDE SEQUENCE [LARGE SCALE GENOMIC DNA]</scope>
    <source>
        <strain>2CP-C</strain>
    </source>
</reference>
<gene>
    <name evidence="1" type="primary">fmt</name>
    <name type="ordered locus">Adeh_3969</name>
</gene>